<feature type="chain" id="PRO_1000131406" description="Phosphatidylserine decarboxylase beta chain" evidence="1">
    <location>
        <begin position="1"/>
        <end position="251"/>
    </location>
</feature>
<feature type="chain" id="PRO_1000131407" description="Phosphatidylserine decarboxylase alpha chain" evidence="1">
    <location>
        <begin position="252"/>
        <end position="287"/>
    </location>
</feature>
<feature type="active site" description="Charge relay system; for autoendoproteolytic cleavage activity" evidence="1">
    <location>
        <position position="89"/>
    </location>
</feature>
<feature type="active site" description="Charge relay system; for autoendoproteolytic cleavage activity" evidence="1">
    <location>
        <position position="146"/>
    </location>
</feature>
<feature type="active site" description="Charge relay system; for autoendoproteolytic cleavage activity" evidence="1">
    <location>
        <position position="252"/>
    </location>
</feature>
<feature type="active site" description="Schiff-base intermediate with substrate; via pyruvic acid; for decarboxylase activity" evidence="1">
    <location>
        <position position="252"/>
    </location>
</feature>
<feature type="site" description="Cleavage (non-hydrolytic); by autocatalysis" evidence="1">
    <location>
        <begin position="251"/>
        <end position="252"/>
    </location>
</feature>
<feature type="modified residue" description="Pyruvic acid (Ser); by autocatalysis" evidence="1">
    <location>
        <position position="252"/>
    </location>
</feature>
<gene>
    <name evidence="1" type="primary">psd</name>
    <name type="ordered locus">Swoo_4180</name>
</gene>
<name>PSD_SHEWM</name>
<keyword id="KW-1003">Cell membrane</keyword>
<keyword id="KW-0210">Decarboxylase</keyword>
<keyword id="KW-0444">Lipid biosynthesis</keyword>
<keyword id="KW-0443">Lipid metabolism</keyword>
<keyword id="KW-0456">Lyase</keyword>
<keyword id="KW-0472">Membrane</keyword>
<keyword id="KW-0594">Phospholipid biosynthesis</keyword>
<keyword id="KW-1208">Phospholipid metabolism</keyword>
<keyword id="KW-0670">Pyruvate</keyword>
<keyword id="KW-1185">Reference proteome</keyword>
<keyword id="KW-0865">Zymogen</keyword>
<reference key="1">
    <citation type="submission" date="2008-02" db="EMBL/GenBank/DDBJ databases">
        <title>Complete sequence of Shewanella woodyi ATCC 51908.</title>
        <authorList>
            <consortium name="US DOE Joint Genome Institute"/>
            <person name="Copeland A."/>
            <person name="Lucas S."/>
            <person name="Lapidus A."/>
            <person name="Glavina del Rio T."/>
            <person name="Dalin E."/>
            <person name="Tice H."/>
            <person name="Bruce D."/>
            <person name="Goodwin L."/>
            <person name="Pitluck S."/>
            <person name="Sims D."/>
            <person name="Brettin T."/>
            <person name="Detter J.C."/>
            <person name="Han C."/>
            <person name="Kuske C.R."/>
            <person name="Schmutz J."/>
            <person name="Larimer F."/>
            <person name="Land M."/>
            <person name="Hauser L."/>
            <person name="Kyrpides N."/>
            <person name="Lykidis A."/>
            <person name="Zhao J.-S."/>
            <person name="Richardson P."/>
        </authorList>
    </citation>
    <scope>NUCLEOTIDE SEQUENCE [LARGE SCALE GENOMIC DNA]</scope>
    <source>
        <strain>ATCC 51908 / MS32</strain>
    </source>
</reference>
<proteinExistence type="inferred from homology"/>
<organism>
    <name type="scientific">Shewanella woodyi (strain ATCC 51908 / MS32)</name>
    <dbReference type="NCBI Taxonomy" id="392500"/>
    <lineage>
        <taxon>Bacteria</taxon>
        <taxon>Pseudomonadati</taxon>
        <taxon>Pseudomonadota</taxon>
        <taxon>Gammaproteobacteria</taxon>
        <taxon>Alteromonadales</taxon>
        <taxon>Shewanellaceae</taxon>
        <taxon>Shewanella</taxon>
    </lineage>
</organism>
<protein>
    <recommendedName>
        <fullName evidence="1">Phosphatidylserine decarboxylase proenzyme</fullName>
        <ecNumber evidence="1">4.1.1.65</ecNumber>
    </recommendedName>
    <component>
        <recommendedName>
            <fullName evidence="1">Phosphatidylserine decarboxylase alpha chain</fullName>
        </recommendedName>
    </component>
    <component>
        <recommendedName>
            <fullName evidence="1">Phosphatidylserine decarboxylase beta chain</fullName>
        </recommendedName>
    </component>
</protein>
<accession>B1KHV8</accession>
<evidence type="ECO:0000255" key="1">
    <source>
        <dbReference type="HAMAP-Rule" id="MF_00662"/>
    </source>
</evidence>
<dbReference type="EC" id="4.1.1.65" evidence="1"/>
<dbReference type="EMBL" id="CP000961">
    <property type="protein sequence ID" value="ACA88436.1"/>
    <property type="molecule type" value="Genomic_DNA"/>
</dbReference>
<dbReference type="RefSeq" id="WP_012326765.1">
    <property type="nucleotide sequence ID" value="NC_010506.1"/>
</dbReference>
<dbReference type="SMR" id="B1KHV8"/>
<dbReference type="STRING" id="392500.Swoo_4180"/>
<dbReference type="KEGG" id="swd:Swoo_4180"/>
<dbReference type="eggNOG" id="COG0688">
    <property type="taxonomic scope" value="Bacteria"/>
</dbReference>
<dbReference type="HOGENOM" id="CLU_029061_4_1_6"/>
<dbReference type="UniPathway" id="UPA00558">
    <property type="reaction ID" value="UER00616"/>
</dbReference>
<dbReference type="Proteomes" id="UP000002168">
    <property type="component" value="Chromosome"/>
</dbReference>
<dbReference type="GO" id="GO:0005886">
    <property type="term" value="C:plasma membrane"/>
    <property type="evidence" value="ECO:0007669"/>
    <property type="project" value="UniProtKB-SubCell"/>
</dbReference>
<dbReference type="GO" id="GO:0004609">
    <property type="term" value="F:phosphatidylserine decarboxylase activity"/>
    <property type="evidence" value="ECO:0007669"/>
    <property type="project" value="UniProtKB-UniRule"/>
</dbReference>
<dbReference type="GO" id="GO:0006646">
    <property type="term" value="P:phosphatidylethanolamine biosynthetic process"/>
    <property type="evidence" value="ECO:0007669"/>
    <property type="project" value="UniProtKB-UniRule"/>
</dbReference>
<dbReference type="HAMAP" id="MF_00662">
    <property type="entry name" value="PS_decarb_PSD_B_type1"/>
    <property type="match status" value="1"/>
</dbReference>
<dbReference type="InterPro" id="IPR003817">
    <property type="entry name" value="PS_Dcarbxylase"/>
</dbReference>
<dbReference type="InterPro" id="IPR033177">
    <property type="entry name" value="PSD-B"/>
</dbReference>
<dbReference type="InterPro" id="IPR033178">
    <property type="entry name" value="PSD_type1_pro"/>
</dbReference>
<dbReference type="NCBIfam" id="TIGR00163">
    <property type="entry name" value="PS_decarb"/>
    <property type="match status" value="1"/>
</dbReference>
<dbReference type="PANTHER" id="PTHR10067">
    <property type="entry name" value="PHOSPHATIDYLSERINE DECARBOXYLASE"/>
    <property type="match status" value="1"/>
</dbReference>
<dbReference type="PANTHER" id="PTHR10067:SF6">
    <property type="entry name" value="PHOSPHATIDYLSERINE DECARBOXYLASE PROENZYME, MITOCHONDRIAL"/>
    <property type="match status" value="1"/>
</dbReference>
<dbReference type="Pfam" id="PF02666">
    <property type="entry name" value="PS_Dcarbxylase"/>
    <property type="match status" value="1"/>
</dbReference>
<comment type="function">
    <text evidence="1">Catalyzes the formation of phosphatidylethanolamine (PtdEtn) from phosphatidylserine (PtdSer).</text>
</comment>
<comment type="catalytic activity">
    <reaction evidence="1">
        <text>a 1,2-diacyl-sn-glycero-3-phospho-L-serine + H(+) = a 1,2-diacyl-sn-glycero-3-phosphoethanolamine + CO2</text>
        <dbReference type="Rhea" id="RHEA:20828"/>
        <dbReference type="ChEBI" id="CHEBI:15378"/>
        <dbReference type="ChEBI" id="CHEBI:16526"/>
        <dbReference type="ChEBI" id="CHEBI:57262"/>
        <dbReference type="ChEBI" id="CHEBI:64612"/>
        <dbReference type="EC" id="4.1.1.65"/>
    </reaction>
</comment>
<comment type="cofactor">
    <cofactor evidence="1">
        <name>pyruvate</name>
        <dbReference type="ChEBI" id="CHEBI:15361"/>
    </cofactor>
    <text evidence="1">Binds 1 pyruvoyl group covalently per subunit.</text>
</comment>
<comment type="pathway">
    <text evidence="1">Phospholipid metabolism; phosphatidylethanolamine biosynthesis; phosphatidylethanolamine from CDP-diacylglycerol: step 2/2.</text>
</comment>
<comment type="subunit">
    <text evidence="1">Heterodimer of a large membrane-associated beta subunit and a small pyruvoyl-containing alpha subunit.</text>
</comment>
<comment type="subcellular location">
    <subcellularLocation>
        <location evidence="1">Cell membrane</location>
        <topology evidence="1">Peripheral membrane protein</topology>
    </subcellularLocation>
</comment>
<comment type="PTM">
    <text evidence="1">Is synthesized initially as an inactive proenzyme. Formation of the active enzyme involves a self-maturation process in which the active site pyruvoyl group is generated from an internal serine residue via an autocatalytic post-translational modification. Two non-identical subunits are generated from the proenzyme in this reaction, and the pyruvate is formed at the N-terminus of the alpha chain, which is derived from the carboxyl end of the proenzyme. The autoendoproteolytic cleavage occurs by a canonical serine protease mechanism, in which the side chain hydroxyl group of the serine supplies its oxygen atom to form the C-terminus of the beta chain, while the remainder of the serine residue undergoes an oxidative deamination to produce ammonia and the pyruvoyl prosthetic group on the alpha chain. During this reaction, the Ser that is part of the protease active site of the proenzyme becomes the pyruvoyl prosthetic group, which constitutes an essential element of the active site of the mature decarboxylase.</text>
</comment>
<comment type="similarity">
    <text evidence="1">Belongs to the phosphatidylserine decarboxylase family. PSD-B subfamily. Prokaryotic type I sub-subfamily.</text>
</comment>
<sequence length="287" mass="31484">MDKIKIALQYMMPKHLISRLVGKLAAAEMGSVTTAAIKWFIKQYKIDMSEAAQSSPEAYSTFNDFFTRALKPGIRPISDKKDYIVHPVDGAVSQCGPIKHGQIFQAKGHEYSSLALLGDRADDAKRFEDGDFATIYLAPKDYHRIHMPIKGTLSKMTYVPGELFSVNPLTAENVPGLFARNERVVAIFETEIGPMAMVLVGATIVASIETIWAGTVTPPTGKKVFTWDYPTEGPAALTLDKGAEMGRFKLGSTVVMLFAKDALDDFADDVTPKAVTRMGQPFAKIED</sequence>